<organismHost>
    <name type="scientific">Equus caballus</name>
    <name type="common">Horse</name>
    <dbReference type="NCBI Taxonomy" id="9796"/>
</organismHost>
<proteinExistence type="evidence at transcript level"/>
<keyword id="KW-0024">Alternative initiation</keyword>
<keyword id="KW-0106">Calcium</keyword>
<keyword id="KW-0167">Capsid protein</keyword>
<keyword id="KW-1015">Disulfide bond</keyword>
<keyword id="KW-0325">Glycoprotein</keyword>
<keyword id="KW-1038">Host endoplasmic reticulum</keyword>
<keyword id="KW-0945">Host-virus interaction</keyword>
<keyword id="KW-0479">Metal-binding</keyword>
<keyword id="KW-1152">Outer capsid protein</keyword>
<keyword id="KW-0732">Signal</keyword>
<keyword id="KW-1146">T=13 icosahedral capsid protein</keyword>
<keyword id="KW-0946">Virion</keyword>
<organism>
    <name type="scientific">Rotavirus A (isolate RVA/Equine/United States/FI-23/1981/G14P4[12])</name>
    <name type="common">RV-A</name>
    <name type="synonym">Rotavirus A (strain FI23)</name>
    <dbReference type="NCBI Taxonomy" id="36443"/>
    <lineage>
        <taxon>Viruses</taxon>
        <taxon>Riboviria</taxon>
        <taxon>Orthornavirae</taxon>
        <taxon>Duplornaviricota</taxon>
        <taxon>Resentoviricetes</taxon>
        <taxon>Reovirales</taxon>
        <taxon>Sedoreoviridae</taxon>
        <taxon>Rotavirus</taxon>
        <taxon>Rotavirus A</taxon>
    </lineage>
</organism>
<comment type="function">
    <text evidence="2">Calcium-binding protein that interacts with rotavirus cell receptors once the initial attachment by VP4 has been achieved. Rotavirus attachment and entry into the host cell probably involves multiple sequential contacts between the outer capsid proteins VP4 and VP7, and the cell receptors. Following entry into the host cell, low intracellular or intravesicular Ca(2+) concentration probably causes the calcium-stabilized VP7 trimers to dissociate from the virion. This step is probably necessary for the membrane-disrupting entry step and the release of VP4, which is locked onto the virion by VP7.</text>
</comment>
<comment type="subunit">
    <text evidence="2">Homotrimer; disulfide-linked. 2 Ca(2+) ions bound at each subunit interface in the trimer hold the trimer together. Interacts with the intermediate capsid protein VP6. Interacts with the outer capsid protein VP5*.</text>
</comment>
<comment type="subcellular location">
    <subcellularLocation>
        <location evidence="2">Virion</location>
    </subcellularLocation>
    <subcellularLocation>
        <location evidence="2">Host endoplasmic reticulum lumen</location>
    </subcellularLocation>
    <text evidence="2">The outer layer contains 780 copies of VP7, grouped as 260 trimers. Immature double-layered particles assembled in the cytoplasm bud across the membrane of the endoplasmic reticulum, acquiring during this process a transient lipid membrane that is modified with the ER resident viral glycoproteins NSP4 and VP7; these enveloped particles also contain VP4. As the particles move towards the interior of the ER cisternae, the transient lipid membrane and the non-structural protein NSP4 are lost, while the virus surface proteins VP4 and VP7 rearrange to form the outermost virus protein layer, yielding mature infectious triple-layered particles.</text>
</comment>
<comment type="alternative products">
    <event type="alternative initiation"/>
    <isoform>
        <id>Q03874-1</id>
        <name>1</name>
        <sequence type="displayed"/>
    </isoform>
    <isoform>
        <id>Q03874-2</id>
        <name>2</name>
        <sequence type="described" ref="VSP_038591"/>
    </isoform>
</comment>
<comment type="PTM">
    <text evidence="2">N-glycosylated.</text>
</comment>
<comment type="PTM">
    <text evidence="2">The N-terminus is blocked possibly by pyroglutamic acid.</text>
</comment>
<comment type="miscellaneous">
    <text evidence="2">Some rotavirus strains are neuraminidase-sensitive and require sialic acid to attach to the cell surface. Some rotavirus strains are integrin-dependent. Some rotavirus strains depend on ganglioside for their entry into the host cell. Hsp70 also seems to be involved in the entry of some strains.</text>
</comment>
<comment type="miscellaneous">
    <text evidence="2">In group A rotaviruses, VP7 defines the G serotype.</text>
</comment>
<comment type="miscellaneous">
    <molecule>Isoform 2</molecule>
    <text evidence="3">Produced by alternative initiation at Met-30 of isoform 1.</text>
</comment>
<comment type="similarity">
    <text evidence="2">Belongs to the rotavirus VP7 family.</text>
</comment>
<name>VP7_ROTE2</name>
<feature type="signal peptide" evidence="2">
    <location>
        <begin position="1"/>
        <end position="50"/>
    </location>
</feature>
<feature type="chain" id="PRO_0000149590" description="Outer capsid glycoprotein VP7" evidence="2">
    <location>
        <begin position="51"/>
        <end position="326"/>
    </location>
</feature>
<feature type="region of interest" description="CNP motif; interaction with ITGAV/ITGB3" evidence="2">
    <location>
        <begin position="165"/>
        <end position="167"/>
    </location>
</feature>
<feature type="region of interest" description="GPR motif; interaction with ITGAX/ITGB2" evidence="2">
    <location>
        <begin position="253"/>
        <end position="255"/>
    </location>
</feature>
<feature type="binding site" evidence="2">
    <location>
        <position position="95"/>
    </location>
    <ligand>
        <name>Ca(2+)</name>
        <dbReference type="ChEBI" id="CHEBI:29108"/>
        <label>1</label>
    </ligand>
</feature>
<feature type="binding site" evidence="2">
    <location>
        <position position="177"/>
    </location>
    <ligand>
        <name>Ca(2+)</name>
        <dbReference type="ChEBI" id="CHEBI:29108"/>
        <label>2</label>
    </ligand>
</feature>
<feature type="binding site" evidence="2">
    <location>
        <position position="206"/>
    </location>
    <ligand>
        <name>Ca(2+)</name>
        <dbReference type="ChEBI" id="CHEBI:29108"/>
        <label>1</label>
    </ligand>
</feature>
<feature type="binding site" evidence="2">
    <location>
        <position position="214"/>
    </location>
    <ligand>
        <name>Ca(2+)</name>
        <dbReference type="ChEBI" id="CHEBI:29108"/>
        <label>1</label>
    </ligand>
</feature>
<feature type="binding site" evidence="2">
    <location>
        <position position="216"/>
    </location>
    <ligand>
        <name>Ca(2+)</name>
        <dbReference type="ChEBI" id="CHEBI:29108"/>
        <label>1</label>
    </ligand>
</feature>
<feature type="binding site" evidence="2">
    <location>
        <position position="228"/>
    </location>
    <ligand>
        <name>Ca(2+)</name>
        <dbReference type="ChEBI" id="CHEBI:29108"/>
        <label>2</label>
    </ligand>
</feature>
<feature type="binding site" evidence="2">
    <location>
        <position position="229"/>
    </location>
    <ligand>
        <name>Ca(2+)</name>
        <dbReference type="ChEBI" id="CHEBI:29108"/>
        <label>2</label>
    </ligand>
</feature>
<feature type="binding site" evidence="2">
    <location>
        <position position="231"/>
    </location>
    <ligand>
        <name>Ca(2+)</name>
        <dbReference type="ChEBI" id="CHEBI:29108"/>
        <label>2</label>
    </ligand>
</feature>
<feature type="binding site" evidence="2">
    <location>
        <position position="301"/>
    </location>
    <ligand>
        <name>Ca(2+)</name>
        <dbReference type="ChEBI" id="CHEBI:29108"/>
        <label>2</label>
    </ligand>
</feature>
<feature type="glycosylation site" description="N-linked (GlcNAc...) asparagine; by host" evidence="1">
    <location>
        <position position="69"/>
    </location>
</feature>
<feature type="disulfide bond" evidence="2">
    <location>
        <begin position="82"/>
        <end position="135"/>
    </location>
</feature>
<feature type="disulfide bond" evidence="2">
    <location>
        <begin position="165"/>
        <end position="249"/>
    </location>
</feature>
<feature type="disulfide bond" evidence="2">
    <location>
        <begin position="191"/>
        <end position="244"/>
    </location>
</feature>
<feature type="disulfide bond" evidence="2">
    <location>
        <begin position="196"/>
        <end position="207"/>
    </location>
</feature>
<feature type="splice variant" id="VSP_038591" description="In isoform 2." evidence="3">
    <location>
        <begin position="1"/>
        <end position="29"/>
    </location>
</feature>
<protein>
    <recommendedName>
        <fullName evidence="2">Outer capsid glycoprotein VP7</fullName>
    </recommendedName>
</protein>
<reference key="1">
    <citation type="journal article" date="1991" name="J. Clin. Microbiol.">
        <title>A novel group A rotavirus G serotype: serological and genomic characterization of equine isolate FI23.</title>
        <authorList>
            <person name="Browning G.F."/>
            <person name="Fitzgerald T.A."/>
            <person name="Chalmers R.M."/>
            <person name="Snodgrass D.R."/>
        </authorList>
    </citation>
    <scope>NUCLEOTIDE SEQUENCE [MRNA]</scope>
</reference>
<evidence type="ECO:0000255" key="1"/>
<evidence type="ECO:0000255" key="2">
    <source>
        <dbReference type="HAMAP-Rule" id="MF_04131"/>
    </source>
</evidence>
<evidence type="ECO:0000305" key="3"/>
<sequence>MYGIECTTILTFLISLILLNYILQLLTRIMDFIIYRFLFIIVFLSPFLKAQNYGINLPISGSMDTAYVNSTQENIFLTSTLCLYYPTEAATQIDDSSWKDTISQLFLTKGWPAGSVYLKEYTDITSFSIDPQLYCDYNVVLMKYDEALQLDMSELADLILNEWLCNPMDITLYYYQQTDEANKWISMGSSCTIKVCPLNTQTLGIGCLTTNVATFEEVATSEKLVIKDVVDGVDHKVECTTTTCTIRNCKKLGPRENVAIIQVGGSDILDITADPTTAPQIARMMRINWKKWWQVFYTVVDYINQIVQVMSKRSRSLDSAAFYYRI</sequence>
<dbReference type="EMBL" id="M61876">
    <property type="protein sequence ID" value="AAA47292.1"/>
    <property type="molecule type" value="mRNA"/>
</dbReference>
<dbReference type="SMR" id="Q03874"/>
<dbReference type="GO" id="GO:0044166">
    <property type="term" value="C:host cell endoplasmic reticulum lumen"/>
    <property type="evidence" value="ECO:0007669"/>
    <property type="project" value="UniProtKB-SubCell"/>
</dbReference>
<dbReference type="GO" id="GO:0039621">
    <property type="term" value="C:T=13 icosahedral viral capsid"/>
    <property type="evidence" value="ECO:0007669"/>
    <property type="project" value="UniProtKB-UniRule"/>
</dbReference>
<dbReference type="GO" id="GO:0039624">
    <property type="term" value="C:viral outer capsid"/>
    <property type="evidence" value="ECO:0007669"/>
    <property type="project" value="UniProtKB-UniRule"/>
</dbReference>
<dbReference type="GO" id="GO:0046872">
    <property type="term" value="F:metal ion binding"/>
    <property type="evidence" value="ECO:0007669"/>
    <property type="project" value="UniProtKB-KW"/>
</dbReference>
<dbReference type="Gene3D" id="3.40.50.11130">
    <property type="entry name" value="Glycoprotein VP7, domain 1"/>
    <property type="match status" value="1"/>
</dbReference>
<dbReference type="Gene3D" id="2.60.120.800">
    <property type="entry name" value="Rotavirus outer-layer protein VP7, domain 2"/>
    <property type="match status" value="1"/>
</dbReference>
<dbReference type="HAMAP" id="MF_04130">
    <property type="entry name" value="Rota_VP7"/>
    <property type="match status" value="1"/>
</dbReference>
<dbReference type="HAMAP" id="MF_04131">
    <property type="entry name" value="Rota_VP7_A"/>
    <property type="match status" value="1"/>
</dbReference>
<dbReference type="InterPro" id="IPR001963">
    <property type="entry name" value="VP7"/>
</dbReference>
<dbReference type="InterPro" id="IPR042207">
    <property type="entry name" value="VP7_1"/>
</dbReference>
<dbReference type="InterPro" id="IPR042210">
    <property type="entry name" value="VP7_2"/>
</dbReference>
<dbReference type="Pfam" id="PF00434">
    <property type="entry name" value="VP7"/>
    <property type="match status" value="1"/>
</dbReference>
<accession>Q03874</accession>